<gene>
    <name evidence="1" type="primary">gltX1</name>
    <name type="ordered locus">Meso_1535</name>
</gene>
<evidence type="ECO:0000255" key="1">
    <source>
        <dbReference type="HAMAP-Rule" id="MF_00022"/>
    </source>
</evidence>
<dbReference type="EC" id="6.1.1.17" evidence="1"/>
<dbReference type="EMBL" id="CP000390">
    <property type="protein sequence ID" value="ABG62931.1"/>
    <property type="molecule type" value="Genomic_DNA"/>
</dbReference>
<dbReference type="SMR" id="Q11I44"/>
<dbReference type="STRING" id="266779.Meso_1535"/>
<dbReference type="KEGG" id="mes:Meso_1535"/>
<dbReference type="eggNOG" id="COG0008">
    <property type="taxonomic scope" value="Bacteria"/>
</dbReference>
<dbReference type="eggNOG" id="COG1384">
    <property type="taxonomic scope" value="Bacteria"/>
</dbReference>
<dbReference type="HOGENOM" id="CLU_015768_6_1_5"/>
<dbReference type="OrthoDB" id="9807503at2"/>
<dbReference type="GO" id="GO:0005737">
    <property type="term" value="C:cytoplasm"/>
    <property type="evidence" value="ECO:0007669"/>
    <property type="project" value="UniProtKB-SubCell"/>
</dbReference>
<dbReference type="GO" id="GO:0005524">
    <property type="term" value="F:ATP binding"/>
    <property type="evidence" value="ECO:0007669"/>
    <property type="project" value="UniProtKB-UniRule"/>
</dbReference>
<dbReference type="GO" id="GO:0004818">
    <property type="term" value="F:glutamate-tRNA ligase activity"/>
    <property type="evidence" value="ECO:0007669"/>
    <property type="project" value="UniProtKB-UniRule"/>
</dbReference>
<dbReference type="GO" id="GO:0000049">
    <property type="term" value="F:tRNA binding"/>
    <property type="evidence" value="ECO:0007669"/>
    <property type="project" value="InterPro"/>
</dbReference>
<dbReference type="GO" id="GO:0006424">
    <property type="term" value="P:glutamyl-tRNA aminoacylation"/>
    <property type="evidence" value="ECO:0007669"/>
    <property type="project" value="UniProtKB-UniRule"/>
</dbReference>
<dbReference type="Gene3D" id="1.10.10.350">
    <property type="match status" value="1"/>
</dbReference>
<dbReference type="Gene3D" id="3.40.50.620">
    <property type="entry name" value="HUPs"/>
    <property type="match status" value="1"/>
</dbReference>
<dbReference type="HAMAP" id="MF_00022">
    <property type="entry name" value="Glu_tRNA_synth_type1"/>
    <property type="match status" value="1"/>
</dbReference>
<dbReference type="InterPro" id="IPR045462">
    <property type="entry name" value="aa-tRNA-synth_I_cd-bd"/>
</dbReference>
<dbReference type="InterPro" id="IPR020751">
    <property type="entry name" value="aa-tRNA-synth_I_codon-bd_sub2"/>
</dbReference>
<dbReference type="InterPro" id="IPR001412">
    <property type="entry name" value="aa-tRNA-synth_I_CS"/>
</dbReference>
<dbReference type="InterPro" id="IPR008925">
    <property type="entry name" value="aa_tRNA-synth_I_cd-bd_sf"/>
</dbReference>
<dbReference type="InterPro" id="IPR004527">
    <property type="entry name" value="Glu-tRNA-ligase_bac/mito"/>
</dbReference>
<dbReference type="InterPro" id="IPR000924">
    <property type="entry name" value="Glu/Gln-tRNA-synth"/>
</dbReference>
<dbReference type="InterPro" id="IPR020058">
    <property type="entry name" value="Glu/Gln-tRNA-synth_Ib_cat-dom"/>
</dbReference>
<dbReference type="InterPro" id="IPR049940">
    <property type="entry name" value="GluQ/Sye"/>
</dbReference>
<dbReference type="InterPro" id="IPR014729">
    <property type="entry name" value="Rossmann-like_a/b/a_fold"/>
</dbReference>
<dbReference type="NCBIfam" id="TIGR00464">
    <property type="entry name" value="gltX_bact"/>
    <property type="match status" value="1"/>
</dbReference>
<dbReference type="PANTHER" id="PTHR43311">
    <property type="entry name" value="GLUTAMATE--TRNA LIGASE"/>
    <property type="match status" value="1"/>
</dbReference>
<dbReference type="PANTHER" id="PTHR43311:SF2">
    <property type="entry name" value="GLUTAMATE--TRNA LIGASE, MITOCHONDRIAL-RELATED"/>
    <property type="match status" value="1"/>
</dbReference>
<dbReference type="Pfam" id="PF19269">
    <property type="entry name" value="Anticodon_2"/>
    <property type="match status" value="1"/>
</dbReference>
<dbReference type="Pfam" id="PF00749">
    <property type="entry name" value="tRNA-synt_1c"/>
    <property type="match status" value="1"/>
</dbReference>
<dbReference type="PRINTS" id="PR00987">
    <property type="entry name" value="TRNASYNTHGLU"/>
</dbReference>
<dbReference type="SUPFAM" id="SSF48163">
    <property type="entry name" value="An anticodon-binding domain of class I aminoacyl-tRNA synthetases"/>
    <property type="match status" value="1"/>
</dbReference>
<dbReference type="SUPFAM" id="SSF52374">
    <property type="entry name" value="Nucleotidylyl transferase"/>
    <property type="match status" value="1"/>
</dbReference>
<dbReference type="PROSITE" id="PS00178">
    <property type="entry name" value="AA_TRNA_LIGASE_I"/>
    <property type="match status" value="1"/>
</dbReference>
<comment type="function">
    <text evidence="1">Catalyzes the attachment of glutamate to tRNA(Glu) in a two-step reaction: glutamate is first activated by ATP to form Glu-AMP and then transferred to the acceptor end of tRNA(Glu).</text>
</comment>
<comment type="catalytic activity">
    <reaction evidence="1">
        <text>tRNA(Glu) + L-glutamate + ATP = L-glutamyl-tRNA(Glu) + AMP + diphosphate</text>
        <dbReference type="Rhea" id="RHEA:23540"/>
        <dbReference type="Rhea" id="RHEA-COMP:9663"/>
        <dbReference type="Rhea" id="RHEA-COMP:9680"/>
        <dbReference type="ChEBI" id="CHEBI:29985"/>
        <dbReference type="ChEBI" id="CHEBI:30616"/>
        <dbReference type="ChEBI" id="CHEBI:33019"/>
        <dbReference type="ChEBI" id="CHEBI:78442"/>
        <dbReference type="ChEBI" id="CHEBI:78520"/>
        <dbReference type="ChEBI" id="CHEBI:456215"/>
        <dbReference type="EC" id="6.1.1.17"/>
    </reaction>
</comment>
<comment type="subunit">
    <text evidence="1">Monomer.</text>
</comment>
<comment type="subcellular location">
    <subcellularLocation>
        <location evidence="1">Cytoplasm</location>
    </subcellularLocation>
</comment>
<comment type="similarity">
    <text evidence="1">Belongs to the class-I aminoacyl-tRNA synthetase family. Glutamate--tRNA ligase type 1 subfamily.</text>
</comment>
<protein>
    <recommendedName>
        <fullName evidence="1">Glutamate--tRNA ligase 1</fullName>
        <ecNumber evidence="1">6.1.1.17</ecNumber>
    </recommendedName>
    <alternativeName>
        <fullName evidence="1">Glutamyl-tRNA synthetase 1</fullName>
        <shortName evidence="1">GluRS 1</shortName>
    </alternativeName>
</protein>
<accession>Q11I44</accession>
<reference key="1">
    <citation type="submission" date="2006-06" db="EMBL/GenBank/DDBJ databases">
        <title>Complete sequence of chromosome of Mesorhizobium sp. BNC1.</title>
        <authorList>
            <consortium name="US DOE Joint Genome Institute"/>
            <person name="Copeland A."/>
            <person name="Lucas S."/>
            <person name="Lapidus A."/>
            <person name="Barry K."/>
            <person name="Detter J.C."/>
            <person name="Glavina del Rio T."/>
            <person name="Hammon N."/>
            <person name="Israni S."/>
            <person name="Dalin E."/>
            <person name="Tice H."/>
            <person name="Pitluck S."/>
            <person name="Chertkov O."/>
            <person name="Brettin T."/>
            <person name="Bruce D."/>
            <person name="Han C."/>
            <person name="Tapia R."/>
            <person name="Gilna P."/>
            <person name="Schmutz J."/>
            <person name="Larimer F."/>
            <person name="Land M."/>
            <person name="Hauser L."/>
            <person name="Kyrpides N."/>
            <person name="Mikhailova N."/>
            <person name="Richardson P."/>
        </authorList>
    </citation>
    <scope>NUCLEOTIDE SEQUENCE [LARGE SCALE GENOMIC DNA]</scope>
    <source>
        <strain>BNC1</strain>
    </source>
</reference>
<sequence length="456" mass="50979">MTVTVRFAPSPTGQIHIGNARTALFNWLFARRAGGSFVLRFDDTDVERSRREYADQIEIDLAWLGIKPDLTVRQSERFGLYNQAVEKLKEAGRLYPCYETAEELELRRKIRLSRRLPPIYGREALKLTEEQKAAYEAEGRKPHWRFLLPNFDSDPFSTGRTEIHWDDVIRGPQTVDLASMSDPVLVREDGTFLYTLPSVVDDIDLGITHVIRGDDHVTNTGAQIALFEALGAKAPCFGHHNLLTTVTGEGLSKRTGALSIASLRKAGIEPMAVASLAVLIGTSEAVTAYRDMEELAAHFEPASSSKSSAKFDPAELEALSRSLIQAMPFEAAAPRLAAMGVEGSIAEPFWNAVRGNIDKLSEAAEWWHIVMKGPEPTEFTEDDRNFVNEAFDLLPPEPWDRETWRSWTEKVKEKTGRKGKALFRPLRLALTGRESGPELADLLPLLGRERTLARQP</sequence>
<keyword id="KW-0030">Aminoacyl-tRNA synthetase</keyword>
<keyword id="KW-0067">ATP-binding</keyword>
<keyword id="KW-0963">Cytoplasm</keyword>
<keyword id="KW-0436">Ligase</keyword>
<keyword id="KW-0547">Nucleotide-binding</keyword>
<keyword id="KW-0648">Protein biosynthesis</keyword>
<organism>
    <name type="scientific">Chelativorans sp. (strain BNC1)</name>
    <dbReference type="NCBI Taxonomy" id="266779"/>
    <lineage>
        <taxon>Bacteria</taxon>
        <taxon>Pseudomonadati</taxon>
        <taxon>Pseudomonadota</taxon>
        <taxon>Alphaproteobacteria</taxon>
        <taxon>Hyphomicrobiales</taxon>
        <taxon>Phyllobacteriaceae</taxon>
        <taxon>Chelativorans</taxon>
    </lineage>
</organism>
<proteinExistence type="inferred from homology"/>
<name>SYE1_CHESB</name>
<feature type="chain" id="PRO_0000367705" description="Glutamate--tRNA ligase 1">
    <location>
        <begin position="1"/>
        <end position="456"/>
    </location>
</feature>
<feature type="short sequence motif" description="'HIGH' region" evidence="1">
    <location>
        <begin position="9"/>
        <end position="19"/>
    </location>
</feature>
<feature type="short sequence motif" description="'KMSKS' region" evidence="1">
    <location>
        <begin position="250"/>
        <end position="254"/>
    </location>
</feature>
<feature type="binding site" evidence="1">
    <location>
        <position position="253"/>
    </location>
    <ligand>
        <name>ATP</name>
        <dbReference type="ChEBI" id="CHEBI:30616"/>
    </ligand>
</feature>